<gene>
    <name evidence="1" type="primary">dxs</name>
    <name type="ordered locus">BCE33L3930</name>
</gene>
<keyword id="KW-0414">Isoprene biosynthesis</keyword>
<keyword id="KW-0460">Magnesium</keyword>
<keyword id="KW-0479">Metal-binding</keyword>
<keyword id="KW-0784">Thiamine biosynthesis</keyword>
<keyword id="KW-0786">Thiamine pyrophosphate</keyword>
<keyword id="KW-0808">Transferase</keyword>
<comment type="function">
    <text evidence="1">Catalyzes the acyloin condensation reaction between C atoms 2 and 3 of pyruvate and glyceraldehyde 3-phosphate to yield 1-deoxy-D-xylulose-5-phosphate (DXP).</text>
</comment>
<comment type="catalytic activity">
    <reaction evidence="1">
        <text>D-glyceraldehyde 3-phosphate + pyruvate + H(+) = 1-deoxy-D-xylulose 5-phosphate + CO2</text>
        <dbReference type="Rhea" id="RHEA:12605"/>
        <dbReference type="ChEBI" id="CHEBI:15361"/>
        <dbReference type="ChEBI" id="CHEBI:15378"/>
        <dbReference type="ChEBI" id="CHEBI:16526"/>
        <dbReference type="ChEBI" id="CHEBI:57792"/>
        <dbReference type="ChEBI" id="CHEBI:59776"/>
        <dbReference type="EC" id="2.2.1.7"/>
    </reaction>
</comment>
<comment type="cofactor">
    <cofactor evidence="1">
        <name>Mg(2+)</name>
        <dbReference type="ChEBI" id="CHEBI:18420"/>
    </cofactor>
    <text evidence="1">Binds 1 Mg(2+) ion per subunit.</text>
</comment>
<comment type="cofactor">
    <cofactor evidence="1">
        <name>thiamine diphosphate</name>
        <dbReference type="ChEBI" id="CHEBI:58937"/>
    </cofactor>
    <text evidence="1">Binds 1 thiamine pyrophosphate per subunit.</text>
</comment>
<comment type="pathway">
    <text evidence="1">Metabolic intermediate biosynthesis; 1-deoxy-D-xylulose 5-phosphate biosynthesis; 1-deoxy-D-xylulose 5-phosphate from D-glyceraldehyde 3-phosphate and pyruvate: step 1/1.</text>
</comment>
<comment type="subunit">
    <text evidence="1">Homodimer.</text>
</comment>
<comment type="similarity">
    <text evidence="1">Belongs to the transketolase family. DXPS subfamily.</text>
</comment>
<proteinExistence type="inferred from homology"/>
<name>DXS_BACCZ</name>
<dbReference type="EC" id="2.2.1.7" evidence="1"/>
<dbReference type="EMBL" id="CP000001">
    <property type="protein sequence ID" value="AAU16338.1"/>
    <property type="molecule type" value="Genomic_DNA"/>
</dbReference>
<dbReference type="RefSeq" id="WP_000366447.1">
    <property type="nucleotide sequence ID" value="NZ_CP009968.1"/>
</dbReference>
<dbReference type="SMR" id="Q635A7"/>
<dbReference type="GeneID" id="45024060"/>
<dbReference type="KEGG" id="bcz:BCE33L3930"/>
<dbReference type="PATRIC" id="fig|288681.22.peg.1467"/>
<dbReference type="UniPathway" id="UPA00064">
    <property type="reaction ID" value="UER00091"/>
</dbReference>
<dbReference type="Proteomes" id="UP000002612">
    <property type="component" value="Chromosome"/>
</dbReference>
<dbReference type="GO" id="GO:0005829">
    <property type="term" value="C:cytosol"/>
    <property type="evidence" value="ECO:0007669"/>
    <property type="project" value="TreeGrafter"/>
</dbReference>
<dbReference type="GO" id="GO:0008661">
    <property type="term" value="F:1-deoxy-D-xylulose-5-phosphate synthase activity"/>
    <property type="evidence" value="ECO:0007669"/>
    <property type="project" value="UniProtKB-UniRule"/>
</dbReference>
<dbReference type="GO" id="GO:0000287">
    <property type="term" value="F:magnesium ion binding"/>
    <property type="evidence" value="ECO:0007669"/>
    <property type="project" value="UniProtKB-UniRule"/>
</dbReference>
<dbReference type="GO" id="GO:0030976">
    <property type="term" value="F:thiamine pyrophosphate binding"/>
    <property type="evidence" value="ECO:0007669"/>
    <property type="project" value="UniProtKB-UniRule"/>
</dbReference>
<dbReference type="GO" id="GO:0052865">
    <property type="term" value="P:1-deoxy-D-xylulose 5-phosphate biosynthetic process"/>
    <property type="evidence" value="ECO:0007669"/>
    <property type="project" value="UniProtKB-UniPathway"/>
</dbReference>
<dbReference type="GO" id="GO:0019288">
    <property type="term" value="P:isopentenyl diphosphate biosynthetic process, methylerythritol 4-phosphate pathway"/>
    <property type="evidence" value="ECO:0007669"/>
    <property type="project" value="TreeGrafter"/>
</dbReference>
<dbReference type="GO" id="GO:0016114">
    <property type="term" value="P:terpenoid biosynthetic process"/>
    <property type="evidence" value="ECO:0007669"/>
    <property type="project" value="UniProtKB-UniRule"/>
</dbReference>
<dbReference type="GO" id="GO:0009228">
    <property type="term" value="P:thiamine biosynthetic process"/>
    <property type="evidence" value="ECO:0007669"/>
    <property type="project" value="UniProtKB-UniRule"/>
</dbReference>
<dbReference type="CDD" id="cd02007">
    <property type="entry name" value="TPP_DXS"/>
    <property type="match status" value="1"/>
</dbReference>
<dbReference type="CDD" id="cd07033">
    <property type="entry name" value="TPP_PYR_DXS_TK_like"/>
    <property type="match status" value="1"/>
</dbReference>
<dbReference type="FunFam" id="3.40.50.920:FF:000002">
    <property type="entry name" value="1-deoxy-D-xylulose-5-phosphate synthase"/>
    <property type="match status" value="1"/>
</dbReference>
<dbReference type="FunFam" id="3.40.50.970:FF:000030">
    <property type="entry name" value="1-deoxy-D-xylulose-5-phosphate synthase"/>
    <property type="match status" value="1"/>
</dbReference>
<dbReference type="Gene3D" id="3.40.50.920">
    <property type="match status" value="1"/>
</dbReference>
<dbReference type="Gene3D" id="3.40.50.970">
    <property type="match status" value="2"/>
</dbReference>
<dbReference type="HAMAP" id="MF_00315">
    <property type="entry name" value="DXP_synth"/>
    <property type="match status" value="1"/>
</dbReference>
<dbReference type="InterPro" id="IPR005477">
    <property type="entry name" value="Dxylulose-5-P_synthase"/>
</dbReference>
<dbReference type="InterPro" id="IPR029061">
    <property type="entry name" value="THDP-binding"/>
</dbReference>
<dbReference type="InterPro" id="IPR009014">
    <property type="entry name" value="Transketo_C/PFOR_II"/>
</dbReference>
<dbReference type="InterPro" id="IPR005475">
    <property type="entry name" value="Transketolase-like_Pyr-bd"/>
</dbReference>
<dbReference type="InterPro" id="IPR020826">
    <property type="entry name" value="Transketolase_BS"/>
</dbReference>
<dbReference type="InterPro" id="IPR033248">
    <property type="entry name" value="Transketolase_C"/>
</dbReference>
<dbReference type="InterPro" id="IPR049557">
    <property type="entry name" value="Transketolase_CS"/>
</dbReference>
<dbReference type="NCBIfam" id="TIGR00204">
    <property type="entry name" value="dxs"/>
    <property type="match status" value="1"/>
</dbReference>
<dbReference type="NCBIfam" id="NF003933">
    <property type="entry name" value="PRK05444.2-2"/>
    <property type="match status" value="1"/>
</dbReference>
<dbReference type="PANTHER" id="PTHR43322">
    <property type="entry name" value="1-D-DEOXYXYLULOSE 5-PHOSPHATE SYNTHASE-RELATED"/>
    <property type="match status" value="1"/>
</dbReference>
<dbReference type="PANTHER" id="PTHR43322:SF5">
    <property type="entry name" value="1-DEOXY-D-XYLULOSE-5-PHOSPHATE SYNTHASE, CHLOROPLASTIC"/>
    <property type="match status" value="1"/>
</dbReference>
<dbReference type="Pfam" id="PF13292">
    <property type="entry name" value="DXP_synthase_N"/>
    <property type="match status" value="1"/>
</dbReference>
<dbReference type="Pfam" id="PF02779">
    <property type="entry name" value="Transket_pyr"/>
    <property type="match status" value="1"/>
</dbReference>
<dbReference type="Pfam" id="PF02780">
    <property type="entry name" value="Transketolase_C"/>
    <property type="match status" value="1"/>
</dbReference>
<dbReference type="SMART" id="SM00861">
    <property type="entry name" value="Transket_pyr"/>
    <property type="match status" value="1"/>
</dbReference>
<dbReference type="SUPFAM" id="SSF52518">
    <property type="entry name" value="Thiamin diphosphate-binding fold (THDP-binding)"/>
    <property type="match status" value="2"/>
</dbReference>
<dbReference type="SUPFAM" id="SSF52922">
    <property type="entry name" value="TK C-terminal domain-like"/>
    <property type="match status" value="1"/>
</dbReference>
<dbReference type="PROSITE" id="PS00801">
    <property type="entry name" value="TRANSKETOLASE_1"/>
    <property type="match status" value="1"/>
</dbReference>
<dbReference type="PROSITE" id="PS00802">
    <property type="entry name" value="TRANSKETOLASE_2"/>
    <property type="match status" value="1"/>
</dbReference>
<reference key="1">
    <citation type="journal article" date="2006" name="J. Bacteriol.">
        <title>Pathogenomic sequence analysis of Bacillus cereus and Bacillus thuringiensis isolates closely related to Bacillus anthracis.</title>
        <authorList>
            <person name="Han C.S."/>
            <person name="Xie G."/>
            <person name="Challacombe J.F."/>
            <person name="Altherr M.R."/>
            <person name="Bhotika S.S."/>
            <person name="Bruce D."/>
            <person name="Campbell C.S."/>
            <person name="Campbell M.L."/>
            <person name="Chen J."/>
            <person name="Chertkov O."/>
            <person name="Cleland C."/>
            <person name="Dimitrijevic M."/>
            <person name="Doggett N.A."/>
            <person name="Fawcett J.J."/>
            <person name="Glavina T."/>
            <person name="Goodwin L.A."/>
            <person name="Hill K.K."/>
            <person name="Hitchcock P."/>
            <person name="Jackson P.J."/>
            <person name="Keim P."/>
            <person name="Kewalramani A.R."/>
            <person name="Longmire J."/>
            <person name="Lucas S."/>
            <person name="Malfatti S."/>
            <person name="McMurry K."/>
            <person name="Meincke L.J."/>
            <person name="Misra M."/>
            <person name="Moseman B.L."/>
            <person name="Mundt M."/>
            <person name="Munk A.C."/>
            <person name="Okinaka R.T."/>
            <person name="Parson-Quintana B."/>
            <person name="Reilly L.P."/>
            <person name="Richardson P."/>
            <person name="Robinson D.L."/>
            <person name="Rubin E."/>
            <person name="Saunders E."/>
            <person name="Tapia R."/>
            <person name="Tesmer J.G."/>
            <person name="Thayer N."/>
            <person name="Thompson L.S."/>
            <person name="Tice H."/>
            <person name="Ticknor L.O."/>
            <person name="Wills P.L."/>
            <person name="Brettin T.S."/>
            <person name="Gilna P."/>
        </authorList>
    </citation>
    <scope>NUCLEOTIDE SEQUENCE [LARGE SCALE GENOMIC DNA]</scope>
    <source>
        <strain>ZK / E33L</strain>
    </source>
</reference>
<organism>
    <name type="scientific">Bacillus cereus (strain ZK / E33L)</name>
    <dbReference type="NCBI Taxonomy" id="288681"/>
    <lineage>
        <taxon>Bacteria</taxon>
        <taxon>Bacillati</taxon>
        <taxon>Bacillota</taxon>
        <taxon>Bacilli</taxon>
        <taxon>Bacillales</taxon>
        <taxon>Bacillaceae</taxon>
        <taxon>Bacillus</taxon>
        <taxon>Bacillus cereus group</taxon>
    </lineage>
</organism>
<evidence type="ECO:0000255" key="1">
    <source>
        <dbReference type="HAMAP-Rule" id="MF_00315"/>
    </source>
</evidence>
<protein>
    <recommendedName>
        <fullName evidence="1">1-deoxy-D-xylulose-5-phosphate synthase</fullName>
        <ecNumber evidence="1">2.2.1.7</ecNumber>
    </recommendedName>
    <alternativeName>
        <fullName evidence="1">1-deoxyxylulose-5-phosphate synthase</fullName>
        <shortName evidence="1">DXP synthase</shortName>
        <shortName evidence="1">DXPS</shortName>
    </alternativeName>
</protein>
<accession>Q635A7</accession>
<feature type="chain" id="PRO_0000256374" description="1-deoxy-D-xylulose-5-phosphate synthase">
    <location>
        <begin position="1"/>
        <end position="630"/>
    </location>
</feature>
<feature type="binding site" evidence="1">
    <location>
        <position position="72"/>
    </location>
    <ligand>
        <name>thiamine diphosphate</name>
        <dbReference type="ChEBI" id="CHEBI:58937"/>
    </ligand>
</feature>
<feature type="binding site" evidence="1">
    <location>
        <begin position="113"/>
        <end position="115"/>
    </location>
    <ligand>
        <name>thiamine diphosphate</name>
        <dbReference type="ChEBI" id="CHEBI:58937"/>
    </ligand>
</feature>
<feature type="binding site" evidence="1">
    <location>
        <position position="144"/>
    </location>
    <ligand>
        <name>Mg(2+)</name>
        <dbReference type="ChEBI" id="CHEBI:18420"/>
    </ligand>
</feature>
<feature type="binding site" evidence="1">
    <location>
        <begin position="145"/>
        <end position="146"/>
    </location>
    <ligand>
        <name>thiamine diphosphate</name>
        <dbReference type="ChEBI" id="CHEBI:58937"/>
    </ligand>
</feature>
<feature type="binding site" evidence="1">
    <location>
        <position position="173"/>
    </location>
    <ligand>
        <name>Mg(2+)</name>
        <dbReference type="ChEBI" id="CHEBI:18420"/>
    </ligand>
</feature>
<feature type="binding site" evidence="1">
    <location>
        <position position="173"/>
    </location>
    <ligand>
        <name>thiamine diphosphate</name>
        <dbReference type="ChEBI" id="CHEBI:58937"/>
    </ligand>
</feature>
<feature type="binding site" evidence="1">
    <location>
        <position position="284"/>
    </location>
    <ligand>
        <name>thiamine diphosphate</name>
        <dbReference type="ChEBI" id="CHEBI:58937"/>
    </ligand>
</feature>
<feature type="binding site" evidence="1">
    <location>
        <position position="367"/>
    </location>
    <ligand>
        <name>thiamine diphosphate</name>
        <dbReference type="ChEBI" id="CHEBI:58937"/>
    </ligand>
</feature>
<sequence>MDLTQIQNPSFLKDMSISELEGLSEDIRKFLIEELSQTGGHIAPNLGVVELTIALHKLFDSPKDKFLWDVGHQSYVHKILTGRAKEFGTLRQYQGLCGFPKRCESEHDVWETGHSSTSLSAAMGMALARDLKKTKEYVIPIIGDGALTGGMALEALNHIGHEKTDMIVILNDNEMSIAPNVGALHNVLGRLRTAGKYHWVKDELEYILKKIPAVGGKVAATAEKIKDSLKYLLVSGVFFEELGFTYLGPVDGHDYEKLFETLQYAKKTKGPVLVHVITKKGKGYKPAESDVIGTWHGTGPYKIESGDFVKPKEVAPAWSAVVSETVLKLARTDERIVAITPAMPVGSKLEKFQKEFPDRMIDVGIAEQHATTMAAGMATQGMKPFLAIYSTFLQRAYDQVVHDICRQNLNVFIGIDRSGLVGADGETHQGVFDISFLRHLPNMVIMMPKDENEGQHLVYTAMQYEDGPIALRYARGNGLGVHMDEELKAIPIGSWETLKEGTQAAILTFGTTIPMAMEAAERLEKAGVSVKVVNARFIKPMDEAYLHDLLGKNIPILTIEEACLIGGFGTGVVEFASENGYHSALVERMGIPDRFIEHGSVTKLLEEIGLTTDAVVDRIHTMIPSKQKRA</sequence>